<accession>B5YQJ3</accession>
<reference key="1">
    <citation type="journal article" date="2011" name="Proc. Natl. Acad. Sci. U.S.A.">
        <title>Genomic anatomy of Escherichia coli O157:H7 outbreaks.</title>
        <authorList>
            <person name="Eppinger M."/>
            <person name="Mammel M.K."/>
            <person name="Leclerc J.E."/>
            <person name="Ravel J."/>
            <person name="Cebula T.A."/>
        </authorList>
    </citation>
    <scope>NUCLEOTIDE SEQUENCE [LARGE SCALE GENOMIC DNA]</scope>
    <source>
        <strain>EC4115 / EHEC</strain>
    </source>
</reference>
<evidence type="ECO:0000255" key="1">
    <source>
        <dbReference type="HAMAP-Rule" id="MF_01186"/>
    </source>
</evidence>
<evidence type="ECO:0000256" key="2">
    <source>
        <dbReference type="SAM" id="MobiDB-lite"/>
    </source>
</evidence>
<name>LPTE_ECO5E</name>
<comment type="function">
    <text evidence="1">Together with LptD, is involved in the assembly of lipopolysaccharide (LPS) at the surface of the outer membrane. Required for the proper assembly of LptD. Binds LPS and may serve as the LPS recognition site at the outer membrane.</text>
</comment>
<comment type="subunit">
    <text evidence="1">Component of the lipopolysaccharide transport and assembly complex. Interacts with LptD.</text>
</comment>
<comment type="subcellular location">
    <subcellularLocation>
        <location evidence="1">Cell outer membrane</location>
        <topology evidence="1">Lipid-anchor</topology>
    </subcellularLocation>
</comment>
<comment type="similarity">
    <text evidence="1">Belongs to the LptE lipoprotein family.</text>
</comment>
<dbReference type="EMBL" id="CP001164">
    <property type="protein sequence ID" value="ACI35735.1"/>
    <property type="molecule type" value="Genomic_DNA"/>
</dbReference>
<dbReference type="RefSeq" id="WP_001269668.1">
    <property type="nucleotide sequence ID" value="NC_011353.1"/>
</dbReference>
<dbReference type="SMR" id="B5YQJ3"/>
<dbReference type="KEGG" id="ecf:ECH74115_0730"/>
<dbReference type="HOGENOM" id="CLU_103309_1_1_6"/>
<dbReference type="GO" id="GO:0009279">
    <property type="term" value="C:cell outer membrane"/>
    <property type="evidence" value="ECO:0007669"/>
    <property type="project" value="UniProtKB-SubCell"/>
</dbReference>
<dbReference type="GO" id="GO:1990351">
    <property type="term" value="C:transporter complex"/>
    <property type="evidence" value="ECO:0007669"/>
    <property type="project" value="TreeGrafter"/>
</dbReference>
<dbReference type="GO" id="GO:0001530">
    <property type="term" value="F:lipopolysaccharide binding"/>
    <property type="evidence" value="ECO:0007669"/>
    <property type="project" value="TreeGrafter"/>
</dbReference>
<dbReference type="GO" id="GO:0043165">
    <property type="term" value="P:Gram-negative-bacterium-type cell outer membrane assembly"/>
    <property type="evidence" value="ECO:0007669"/>
    <property type="project" value="UniProtKB-UniRule"/>
</dbReference>
<dbReference type="GO" id="GO:0015920">
    <property type="term" value="P:lipopolysaccharide transport"/>
    <property type="evidence" value="ECO:0007669"/>
    <property type="project" value="TreeGrafter"/>
</dbReference>
<dbReference type="FunFam" id="3.30.160.150:FF:000001">
    <property type="entry name" value="LPS-assembly lipoprotein LptE"/>
    <property type="match status" value="1"/>
</dbReference>
<dbReference type="Gene3D" id="3.30.160.150">
    <property type="entry name" value="Lipoprotein like domain"/>
    <property type="match status" value="1"/>
</dbReference>
<dbReference type="HAMAP" id="MF_01186">
    <property type="entry name" value="LPS_assembly_LptE"/>
    <property type="match status" value="1"/>
</dbReference>
<dbReference type="InterPro" id="IPR007485">
    <property type="entry name" value="LPS_assembly_LptE"/>
</dbReference>
<dbReference type="NCBIfam" id="NF008062">
    <property type="entry name" value="PRK10796.1"/>
    <property type="match status" value="1"/>
</dbReference>
<dbReference type="PANTHER" id="PTHR38098">
    <property type="entry name" value="LPS-ASSEMBLY LIPOPROTEIN LPTE"/>
    <property type="match status" value="1"/>
</dbReference>
<dbReference type="PANTHER" id="PTHR38098:SF1">
    <property type="entry name" value="LPS-ASSEMBLY LIPOPROTEIN LPTE"/>
    <property type="match status" value="1"/>
</dbReference>
<dbReference type="Pfam" id="PF04390">
    <property type="entry name" value="LptE"/>
    <property type="match status" value="1"/>
</dbReference>
<dbReference type="PROSITE" id="PS51257">
    <property type="entry name" value="PROKAR_LIPOPROTEIN"/>
    <property type="match status" value="1"/>
</dbReference>
<keyword id="KW-0998">Cell outer membrane</keyword>
<keyword id="KW-0449">Lipoprotein</keyword>
<keyword id="KW-0472">Membrane</keyword>
<keyword id="KW-0564">Palmitate</keyword>
<keyword id="KW-0732">Signal</keyword>
<protein>
    <recommendedName>
        <fullName evidence="1">LPS-assembly lipoprotein LptE</fullName>
    </recommendedName>
</protein>
<sequence length="193" mass="21318">MRYLATLLLSLAVLITAGCGWHLRDTTQVPSTMKVMILDSGDPNGPLSRAVRNQLRLNGVELLDKETTRKDVPSLRLGAVSISQDTASVFRNGQTAEYQMVMTVSASVLIPGRDIYPISTKVFRSFFDNPQMALAKDNEQEMIIKEMYDRAAEQLIRKLPSIRAADIRSDEEQTSTTTDTPATPARVSTTLGN</sequence>
<feature type="signal peptide" evidence="1">
    <location>
        <begin position="1"/>
        <end position="18"/>
    </location>
</feature>
<feature type="chain" id="PRO_1000138267" description="LPS-assembly lipoprotein LptE">
    <location>
        <begin position="19"/>
        <end position="193"/>
    </location>
</feature>
<feature type="region of interest" description="Disordered" evidence="2">
    <location>
        <begin position="166"/>
        <end position="193"/>
    </location>
</feature>
<feature type="compositionally biased region" description="Low complexity" evidence="2">
    <location>
        <begin position="174"/>
        <end position="186"/>
    </location>
</feature>
<feature type="lipid moiety-binding region" description="N-palmitoyl cysteine" evidence="1">
    <location>
        <position position="19"/>
    </location>
</feature>
<feature type="lipid moiety-binding region" description="S-diacylglycerol cysteine" evidence="1">
    <location>
        <position position="19"/>
    </location>
</feature>
<proteinExistence type="inferred from homology"/>
<gene>
    <name evidence="1" type="primary">lptE</name>
    <name type="synonym">rlpB</name>
    <name type="ordered locus">ECH74115_0730</name>
</gene>
<organism>
    <name type="scientific">Escherichia coli O157:H7 (strain EC4115 / EHEC)</name>
    <dbReference type="NCBI Taxonomy" id="444450"/>
    <lineage>
        <taxon>Bacteria</taxon>
        <taxon>Pseudomonadati</taxon>
        <taxon>Pseudomonadota</taxon>
        <taxon>Gammaproteobacteria</taxon>
        <taxon>Enterobacterales</taxon>
        <taxon>Enterobacteriaceae</taxon>
        <taxon>Escherichia</taxon>
    </lineage>
</organism>